<keyword id="KW-0249">Electron transport</keyword>
<keyword id="KW-0274">FAD</keyword>
<keyword id="KW-0285">Flavoprotein</keyword>
<keyword id="KW-0813">Transport</keyword>
<dbReference type="EMBL" id="AF072475">
    <property type="protein sequence ID" value="AAC31170.1"/>
    <property type="molecule type" value="Genomic_DNA"/>
</dbReference>
<dbReference type="SMR" id="O85692"/>
<dbReference type="BioCyc" id="MetaCyc:MONOMER-21345"/>
<dbReference type="GO" id="GO:0009055">
    <property type="term" value="F:electron transfer activity"/>
    <property type="evidence" value="ECO:0007669"/>
    <property type="project" value="InterPro"/>
</dbReference>
<dbReference type="GO" id="GO:0050660">
    <property type="term" value="F:flavin adenine dinucleotide binding"/>
    <property type="evidence" value="ECO:0007669"/>
    <property type="project" value="InterPro"/>
</dbReference>
<dbReference type="GO" id="GO:0033539">
    <property type="term" value="P:fatty acid beta-oxidation using acyl-CoA dehydrogenase"/>
    <property type="evidence" value="ECO:0007669"/>
    <property type="project" value="TreeGrafter"/>
</dbReference>
<dbReference type="CDD" id="cd01715">
    <property type="entry name" value="ETF_alpha"/>
    <property type="match status" value="1"/>
</dbReference>
<dbReference type="Gene3D" id="3.40.50.620">
    <property type="entry name" value="HUPs"/>
    <property type="match status" value="1"/>
</dbReference>
<dbReference type="Gene3D" id="3.40.50.1220">
    <property type="entry name" value="TPP-binding domain"/>
    <property type="match status" value="1"/>
</dbReference>
<dbReference type="InterPro" id="IPR029035">
    <property type="entry name" value="DHS-like_NAD/FAD-binding_dom"/>
</dbReference>
<dbReference type="InterPro" id="IPR014730">
    <property type="entry name" value="ETF_a/b_N"/>
</dbReference>
<dbReference type="InterPro" id="IPR001308">
    <property type="entry name" value="ETF_a/FixB"/>
</dbReference>
<dbReference type="InterPro" id="IPR033947">
    <property type="entry name" value="ETF_alpha_N"/>
</dbReference>
<dbReference type="InterPro" id="IPR014731">
    <property type="entry name" value="ETF_asu_C"/>
</dbReference>
<dbReference type="InterPro" id="IPR018206">
    <property type="entry name" value="ETF_asu_C_CS"/>
</dbReference>
<dbReference type="InterPro" id="IPR014729">
    <property type="entry name" value="Rossmann-like_a/b/a_fold"/>
</dbReference>
<dbReference type="PANTHER" id="PTHR43153">
    <property type="entry name" value="ELECTRON TRANSFER FLAVOPROTEIN ALPHA"/>
    <property type="match status" value="1"/>
</dbReference>
<dbReference type="PANTHER" id="PTHR43153:SF1">
    <property type="entry name" value="ELECTRON TRANSFER FLAVOPROTEIN SUBUNIT ALPHA, MITOCHONDRIAL"/>
    <property type="match status" value="1"/>
</dbReference>
<dbReference type="Pfam" id="PF01012">
    <property type="entry name" value="ETF"/>
    <property type="match status" value="1"/>
</dbReference>
<dbReference type="Pfam" id="PF00766">
    <property type="entry name" value="ETF_alpha"/>
    <property type="match status" value="1"/>
</dbReference>
<dbReference type="PIRSF" id="PIRSF000089">
    <property type="entry name" value="Electra_flavoP_a"/>
    <property type="match status" value="1"/>
</dbReference>
<dbReference type="SMART" id="SM00893">
    <property type="entry name" value="ETF"/>
    <property type="match status" value="1"/>
</dbReference>
<dbReference type="SUPFAM" id="SSF52402">
    <property type="entry name" value="Adenine nucleotide alpha hydrolases-like"/>
    <property type="match status" value="1"/>
</dbReference>
<dbReference type="SUPFAM" id="SSF52467">
    <property type="entry name" value="DHS-like NAD/FAD-binding domain"/>
    <property type="match status" value="1"/>
</dbReference>
<dbReference type="PROSITE" id="PS00696">
    <property type="entry name" value="ETF_ALPHA"/>
    <property type="match status" value="1"/>
</dbReference>
<name>ETFA_MEGEL</name>
<accession>O85692</accession>
<protein>
    <recommendedName>
        <fullName>Electron transfer flavoprotein subunit alpha</fullName>
        <shortName>Alpha-ETF</shortName>
    </recommendedName>
    <alternativeName>
        <fullName>Electron transfer flavoprotein large subunit</fullName>
        <shortName>ETFLS</shortName>
    </alternativeName>
</protein>
<proteinExistence type="inferred from homology"/>
<gene>
    <name type="primary">etfA</name>
</gene>
<evidence type="ECO:0000250" key="1"/>
<evidence type="ECO:0000255" key="2"/>
<evidence type="ECO:0000305" key="3"/>
<comment type="function">
    <text evidence="1">The electron transfer flavoprotein serves as a specific electron acceptor for other dehydrogenases. It transfers the electrons to the main respiratory chain via ETF-ubiquinone oxidoreductase (ETF dehydrogenase) (By similarity).</text>
</comment>
<comment type="cofactor">
    <cofactor>
        <name>FAD</name>
        <dbReference type="ChEBI" id="CHEBI:57692"/>
    </cofactor>
    <text>Binds 2 FAD per dimer.</text>
</comment>
<comment type="subunit">
    <text>Heterodimer of an alpha and a beta subunit.</text>
</comment>
<comment type="similarity">
    <text evidence="3">Belongs to the ETF alpha-subunit/FixB family.</text>
</comment>
<sequence>MDLAEYKGIYVIAEQFEGKLRDVSFELLGQARILADTIGDEVGAILIGKDVKPLAQELIAHGAHKVYVYDDPQLEHYNTTAYAKVICDFFHEEKPNVFLVGATNIGRDLGPRVANSLKTGLTADCTQLGVDDDKKTIVWTRPALGGNIMAEIICPDNRPQMGTVRPHVFKKPEADPSATGEVIEKKANLSDADFMTKFVELIKLGGEGVKIEDADVIVAGGRGMNSEEPFKTGILKECADVLGGAVGASRAAVDAGWIDALHQVGQTGKTVGPKIYIACAISGAIQPLAGMTGSDCIIAINKDEDAPIFKVCDYGIVGDVFKVLPLLTEAIKKQKGIA</sequence>
<feature type="chain" id="PRO_0000167850" description="Electron transfer flavoprotein subunit alpha">
    <location>
        <begin position="1"/>
        <end position="338"/>
    </location>
</feature>
<feature type="binding site" evidence="2">
    <location>
        <begin position="275"/>
        <end position="303"/>
    </location>
    <ligand>
        <name>FAD</name>
        <dbReference type="ChEBI" id="CHEBI:57692"/>
    </ligand>
</feature>
<reference key="1">
    <citation type="journal article" date="1998" name="J. Biol. Chem.">
        <title>Cloning and analysis of the genes for a novel electron-transferring flavoprotein from Megasphaera elsdenii. Expression and characterization of the recombinant protein.</title>
        <authorList>
            <person name="O'Neill H."/>
            <person name="Mayhew S.G."/>
            <person name="Butler G."/>
        </authorList>
    </citation>
    <scope>NUCLEOTIDE SEQUENCE [GENOMIC DNA]</scope>
    <source>
        <strain>ATCC 25940 / DSM 20460 / JCM 1772 / NCIB 8927</strain>
    </source>
</reference>
<organism>
    <name type="scientific">Megasphaera elsdenii</name>
    <dbReference type="NCBI Taxonomy" id="907"/>
    <lineage>
        <taxon>Bacteria</taxon>
        <taxon>Bacillati</taxon>
        <taxon>Bacillota</taxon>
        <taxon>Negativicutes</taxon>
        <taxon>Veillonellales</taxon>
        <taxon>Veillonellaceae</taxon>
        <taxon>Megasphaera</taxon>
    </lineage>
</organism>